<keyword id="KW-0131">Cell cycle</keyword>
<keyword id="KW-0132">Cell division</keyword>
<keyword id="KW-0133">Cell shape</keyword>
<keyword id="KW-0961">Cell wall biogenesis/degradation</keyword>
<keyword id="KW-0963">Cytoplasm</keyword>
<keyword id="KW-0573">Peptidoglycan synthesis</keyword>
<keyword id="KW-0670">Pyruvate</keyword>
<keyword id="KW-0808">Transferase</keyword>
<sequence>MTYLEIEGTNHLSGNVTISGAKNAALPLIVSSILAKNEVKINNVPNVADIKTLISLLENLGAKVNFQNNSALLNTNTLNQTIAKYDIVRKMRASILTLGPLLARFGHCEVSLPGGCAIGQRPIDLHLLALEKMGANIQIKQGYVVASGNLKGNEILFDKITVTGSENIIMAAALAKGKTKLLNVAKEPEVVQLCEVLKDAGLEIKGIGTDELEIYGTDGELLEFKEFSVIPDRIEAGTYLCAGAITNSKITLDKVNATHLSAVLAKLHQMGFETLIAEDSITLLPAKEIKPVEIMTSEYPGFPTDMQAQFMALALKANGTSIIDERLFENRFMHVSELLRMGADIKLNGHIATIVGGKELNAADVMATDLRASSALILAALAAKGTSKVHRIYHLDRGYENLEEKFKGLGAKITRLEE</sequence>
<feature type="chain" id="PRO_1000071329" description="UDP-N-acetylglucosamine 1-carboxyvinyltransferase">
    <location>
        <begin position="1"/>
        <end position="418"/>
    </location>
</feature>
<feature type="active site" description="Proton donor" evidence="1">
    <location>
        <position position="116"/>
    </location>
</feature>
<feature type="binding site" evidence="1">
    <location>
        <begin position="22"/>
        <end position="23"/>
    </location>
    <ligand>
        <name>phosphoenolpyruvate</name>
        <dbReference type="ChEBI" id="CHEBI:58702"/>
    </ligand>
</feature>
<feature type="binding site" evidence="1">
    <location>
        <position position="92"/>
    </location>
    <ligand>
        <name>UDP-N-acetyl-alpha-D-glucosamine</name>
        <dbReference type="ChEBI" id="CHEBI:57705"/>
    </ligand>
</feature>
<feature type="binding site" evidence="1">
    <location>
        <begin position="121"/>
        <end position="125"/>
    </location>
    <ligand>
        <name>UDP-N-acetyl-alpha-D-glucosamine</name>
        <dbReference type="ChEBI" id="CHEBI:57705"/>
    </ligand>
</feature>
<feature type="binding site" evidence="1">
    <location>
        <position position="305"/>
    </location>
    <ligand>
        <name>UDP-N-acetyl-alpha-D-glucosamine</name>
        <dbReference type="ChEBI" id="CHEBI:57705"/>
    </ligand>
</feature>
<feature type="binding site" evidence="1">
    <location>
        <position position="327"/>
    </location>
    <ligand>
        <name>UDP-N-acetyl-alpha-D-glucosamine</name>
        <dbReference type="ChEBI" id="CHEBI:57705"/>
    </ligand>
</feature>
<feature type="modified residue" description="2-(S-cysteinyl)pyruvic acid O-phosphothioketal" evidence="1">
    <location>
        <position position="116"/>
    </location>
</feature>
<reference key="1">
    <citation type="journal article" date="2007" name="J. Bacteriol.">
        <title>The complete genome sequence of Campylobacter jejuni strain 81116 (NCTC11828).</title>
        <authorList>
            <person name="Pearson B.M."/>
            <person name="Gaskin D.J.H."/>
            <person name="Segers R.P.A.M."/>
            <person name="Wells J.M."/>
            <person name="Nuijten P.J.M."/>
            <person name="van Vliet A.H.M."/>
        </authorList>
    </citation>
    <scope>NUCLEOTIDE SEQUENCE [LARGE SCALE GENOMIC DNA]</scope>
    <source>
        <strain>81116 / NCTC 11828</strain>
    </source>
</reference>
<dbReference type="EC" id="2.5.1.7" evidence="1"/>
<dbReference type="EMBL" id="CP000814">
    <property type="protein sequence ID" value="ABV52404.1"/>
    <property type="molecule type" value="Genomic_DNA"/>
</dbReference>
<dbReference type="RefSeq" id="WP_002866936.1">
    <property type="nucleotide sequence ID" value="NC_009839.1"/>
</dbReference>
<dbReference type="SMR" id="A8FLR7"/>
<dbReference type="KEGG" id="cju:C8J_0805"/>
<dbReference type="HOGENOM" id="CLU_027387_0_0_7"/>
<dbReference type="UniPathway" id="UPA00219"/>
<dbReference type="GO" id="GO:0005737">
    <property type="term" value="C:cytoplasm"/>
    <property type="evidence" value="ECO:0007669"/>
    <property type="project" value="UniProtKB-SubCell"/>
</dbReference>
<dbReference type="GO" id="GO:0008760">
    <property type="term" value="F:UDP-N-acetylglucosamine 1-carboxyvinyltransferase activity"/>
    <property type="evidence" value="ECO:0007669"/>
    <property type="project" value="UniProtKB-UniRule"/>
</dbReference>
<dbReference type="GO" id="GO:0051301">
    <property type="term" value="P:cell division"/>
    <property type="evidence" value="ECO:0007669"/>
    <property type="project" value="UniProtKB-KW"/>
</dbReference>
<dbReference type="GO" id="GO:0071555">
    <property type="term" value="P:cell wall organization"/>
    <property type="evidence" value="ECO:0007669"/>
    <property type="project" value="UniProtKB-KW"/>
</dbReference>
<dbReference type="GO" id="GO:0009252">
    <property type="term" value="P:peptidoglycan biosynthetic process"/>
    <property type="evidence" value="ECO:0007669"/>
    <property type="project" value="UniProtKB-UniRule"/>
</dbReference>
<dbReference type="GO" id="GO:0008360">
    <property type="term" value="P:regulation of cell shape"/>
    <property type="evidence" value="ECO:0007669"/>
    <property type="project" value="UniProtKB-KW"/>
</dbReference>
<dbReference type="GO" id="GO:0019277">
    <property type="term" value="P:UDP-N-acetylgalactosamine biosynthetic process"/>
    <property type="evidence" value="ECO:0007669"/>
    <property type="project" value="InterPro"/>
</dbReference>
<dbReference type="CDD" id="cd01555">
    <property type="entry name" value="UdpNAET"/>
    <property type="match status" value="1"/>
</dbReference>
<dbReference type="FunFam" id="3.65.10.10:FF:000001">
    <property type="entry name" value="UDP-N-acetylglucosamine 1-carboxyvinyltransferase"/>
    <property type="match status" value="1"/>
</dbReference>
<dbReference type="Gene3D" id="3.65.10.10">
    <property type="entry name" value="Enolpyruvate transferase domain"/>
    <property type="match status" value="2"/>
</dbReference>
<dbReference type="HAMAP" id="MF_00111">
    <property type="entry name" value="MurA"/>
    <property type="match status" value="1"/>
</dbReference>
<dbReference type="InterPro" id="IPR001986">
    <property type="entry name" value="Enolpyruvate_Tfrase_dom"/>
</dbReference>
<dbReference type="InterPro" id="IPR036968">
    <property type="entry name" value="Enolpyruvate_Tfrase_sf"/>
</dbReference>
<dbReference type="InterPro" id="IPR050068">
    <property type="entry name" value="MurA_subfamily"/>
</dbReference>
<dbReference type="InterPro" id="IPR013792">
    <property type="entry name" value="RNA3'P_cycl/enolpyr_Trfase_a/b"/>
</dbReference>
<dbReference type="InterPro" id="IPR005750">
    <property type="entry name" value="UDP_GlcNAc_COvinyl_MurA"/>
</dbReference>
<dbReference type="NCBIfam" id="TIGR01072">
    <property type="entry name" value="murA"/>
    <property type="match status" value="1"/>
</dbReference>
<dbReference type="NCBIfam" id="NF006873">
    <property type="entry name" value="PRK09369.1"/>
    <property type="match status" value="1"/>
</dbReference>
<dbReference type="PANTHER" id="PTHR43783">
    <property type="entry name" value="UDP-N-ACETYLGLUCOSAMINE 1-CARBOXYVINYLTRANSFERASE"/>
    <property type="match status" value="1"/>
</dbReference>
<dbReference type="PANTHER" id="PTHR43783:SF1">
    <property type="entry name" value="UDP-N-ACETYLGLUCOSAMINE 1-CARBOXYVINYLTRANSFERASE"/>
    <property type="match status" value="1"/>
</dbReference>
<dbReference type="Pfam" id="PF00275">
    <property type="entry name" value="EPSP_synthase"/>
    <property type="match status" value="1"/>
</dbReference>
<dbReference type="SUPFAM" id="SSF55205">
    <property type="entry name" value="EPT/RTPC-like"/>
    <property type="match status" value="1"/>
</dbReference>
<organism>
    <name type="scientific">Campylobacter jejuni subsp. jejuni serotype O:6 (strain 81116 / NCTC 11828)</name>
    <dbReference type="NCBI Taxonomy" id="407148"/>
    <lineage>
        <taxon>Bacteria</taxon>
        <taxon>Pseudomonadati</taxon>
        <taxon>Campylobacterota</taxon>
        <taxon>Epsilonproteobacteria</taxon>
        <taxon>Campylobacterales</taxon>
        <taxon>Campylobacteraceae</taxon>
        <taxon>Campylobacter</taxon>
    </lineage>
</organism>
<name>MURA_CAMJ8</name>
<proteinExistence type="inferred from homology"/>
<evidence type="ECO:0000255" key="1">
    <source>
        <dbReference type="HAMAP-Rule" id="MF_00111"/>
    </source>
</evidence>
<protein>
    <recommendedName>
        <fullName evidence="1">UDP-N-acetylglucosamine 1-carboxyvinyltransferase</fullName>
        <ecNumber evidence="1">2.5.1.7</ecNumber>
    </recommendedName>
    <alternativeName>
        <fullName evidence="1">Enoylpyruvate transferase</fullName>
    </alternativeName>
    <alternativeName>
        <fullName evidence="1">UDP-N-acetylglucosamine enolpyruvyl transferase</fullName>
        <shortName evidence="1">EPT</shortName>
    </alternativeName>
</protein>
<comment type="function">
    <text evidence="1">Cell wall formation. Adds enolpyruvyl to UDP-N-acetylglucosamine.</text>
</comment>
<comment type="catalytic activity">
    <reaction evidence="1">
        <text>phosphoenolpyruvate + UDP-N-acetyl-alpha-D-glucosamine = UDP-N-acetyl-3-O-(1-carboxyvinyl)-alpha-D-glucosamine + phosphate</text>
        <dbReference type="Rhea" id="RHEA:18681"/>
        <dbReference type="ChEBI" id="CHEBI:43474"/>
        <dbReference type="ChEBI" id="CHEBI:57705"/>
        <dbReference type="ChEBI" id="CHEBI:58702"/>
        <dbReference type="ChEBI" id="CHEBI:68483"/>
        <dbReference type="EC" id="2.5.1.7"/>
    </reaction>
</comment>
<comment type="pathway">
    <text evidence="1">Cell wall biogenesis; peptidoglycan biosynthesis.</text>
</comment>
<comment type="subcellular location">
    <subcellularLocation>
        <location evidence="1">Cytoplasm</location>
    </subcellularLocation>
</comment>
<comment type="similarity">
    <text evidence="1">Belongs to the EPSP synthase family. MurA subfamily.</text>
</comment>
<gene>
    <name evidence="1" type="primary">murA</name>
    <name type="ordered locus">C8J_0805</name>
</gene>
<accession>A8FLR7</accession>